<dbReference type="EMBL" id="U82598">
    <property type="protein sequence ID" value="AAB40759.1"/>
    <property type="molecule type" value="Genomic_DNA"/>
</dbReference>
<dbReference type="EMBL" id="U00096">
    <property type="protein sequence ID" value="AYC08184.1"/>
    <property type="molecule type" value="Genomic_DNA"/>
</dbReference>
<dbReference type="EMBL" id="AP009048">
    <property type="protein sequence ID" value="BAE76338.1"/>
    <property type="molecule type" value="Genomic_DNA"/>
</dbReference>
<dbReference type="PIR" id="A64789">
    <property type="entry name" value="A64789"/>
</dbReference>
<dbReference type="BioGRID" id="4259888">
    <property type="interactions" value="8"/>
</dbReference>
<dbReference type="FunCoup" id="P77087">
    <property type="interactions" value="19"/>
</dbReference>
<dbReference type="EnsemblBacteria" id="AYC08184">
    <property type="protein sequence ID" value="AYC08184"/>
    <property type="gene ID" value="b0563"/>
</dbReference>
<dbReference type="KEGG" id="ecj:JW0552"/>
<dbReference type="EchoBASE" id="EB4064"/>
<dbReference type="HOGENOM" id="CLU_176161_0_0_6"/>
<dbReference type="InParanoid" id="P77087"/>
<dbReference type="OMA" id="WRHGINI"/>
<dbReference type="BioCyc" id="EcoCyc:G6317-MONOMER"/>
<dbReference type="PRO" id="PR:P77087"/>
<dbReference type="Proteomes" id="UP000000625">
    <property type="component" value="Chromosome"/>
</dbReference>
<dbReference type="InterPro" id="IPR003458">
    <property type="entry name" value="Phage_T4_Gp38_tail_assem"/>
</dbReference>
<dbReference type="Pfam" id="PF02413">
    <property type="entry name" value="Caudo_TAP"/>
    <property type="match status" value="1"/>
</dbReference>
<protein>
    <recommendedName>
        <fullName>Protein TfaX</fullName>
    </recommendedName>
</protein>
<name>TFAX_ECOLI</name>
<feature type="chain" id="PRO_0000070315" description="Protein TfaX">
    <location>
        <begin position="1"/>
        <end position="61"/>
    </location>
</feature>
<sequence length="61" mass="7088">MLPQHSDIEIAWYASIQQEPNGWKTVTTQFYIQEFSEYIAPLQDAVDLEIATEEERSLLEA</sequence>
<evidence type="ECO:0000269" key="1">
    <source>
    </source>
</evidence>
<evidence type="ECO:0000305" key="2"/>
<evidence type="ECO:0000305" key="3">
    <source>
    </source>
</evidence>
<organism>
    <name type="scientific">Escherichia coli (strain K12)</name>
    <dbReference type="NCBI Taxonomy" id="83333"/>
    <lineage>
        <taxon>Bacteria</taxon>
        <taxon>Pseudomonadati</taxon>
        <taxon>Pseudomonadota</taxon>
        <taxon>Gammaproteobacteria</taxon>
        <taxon>Enterobacterales</taxon>
        <taxon>Enterobacteriaceae</taxon>
        <taxon>Escherichia</taxon>
    </lineage>
</organism>
<reference key="1">
    <citation type="submission" date="1997-01" db="EMBL/GenBank/DDBJ databases">
        <title>Sequence of minutes 4-25 of Escherichia coli.</title>
        <authorList>
            <person name="Chung E."/>
            <person name="Allen E."/>
            <person name="Araujo R."/>
            <person name="Aparicio A.M."/>
            <person name="Davis K."/>
            <person name="Duncan M."/>
            <person name="Federspiel N."/>
            <person name="Hyman R."/>
            <person name="Kalman S."/>
            <person name="Komp C."/>
            <person name="Kurdi O."/>
            <person name="Lew H."/>
            <person name="Lin D."/>
            <person name="Namath A."/>
            <person name="Oefner P."/>
            <person name="Roberts D."/>
            <person name="Schramm S."/>
            <person name="Davis R.W."/>
        </authorList>
    </citation>
    <scope>NUCLEOTIDE SEQUENCE [LARGE SCALE GENOMIC DNA]</scope>
    <source>
        <strain>K12 / MG1655 / ATCC 47076</strain>
    </source>
</reference>
<reference key="2">
    <citation type="journal article" date="1997" name="Science">
        <title>The complete genome sequence of Escherichia coli K-12.</title>
        <authorList>
            <person name="Blattner F.R."/>
            <person name="Plunkett G. III"/>
            <person name="Bloch C.A."/>
            <person name="Perna N.T."/>
            <person name="Burland V."/>
            <person name="Riley M."/>
            <person name="Collado-Vides J."/>
            <person name="Glasner J.D."/>
            <person name="Rode C.K."/>
            <person name="Mayhew G.F."/>
            <person name="Gregor J."/>
            <person name="Davis N.W."/>
            <person name="Kirkpatrick H.A."/>
            <person name="Goeden M.A."/>
            <person name="Rose D.J."/>
            <person name="Mau B."/>
            <person name="Shao Y."/>
        </authorList>
    </citation>
    <scope>NUCLEOTIDE SEQUENCE [LARGE SCALE GENOMIC DNA]</scope>
    <source>
        <strain>K12 / MG1655 / ATCC 47076</strain>
    </source>
</reference>
<reference key="3">
    <citation type="journal article" date="2006" name="Mol. Syst. Biol.">
        <title>Highly accurate genome sequences of Escherichia coli K-12 strains MG1655 and W3110.</title>
        <authorList>
            <person name="Hayashi K."/>
            <person name="Morooka N."/>
            <person name="Yamamoto Y."/>
            <person name="Fujita K."/>
            <person name="Isono K."/>
            <person name="Choi S."/>
            <person name="Ohtsubo E."/>
            <person name="Baba T."/>
            <person name="Wanner B.L."/>
            <person name="Mori H."/>
            <person name="Horiuchi T."/>
        </authorList>
    </citation>
    <scope>NUCLEOTIDE SEQUENCE [LARGE SCALE GENOMIC DNA]</scope>
    <source>
        <strain>K12 / W3110 / ATCC 27325 / DSM 5911</strain>
    </source>
</reference>
<reference key="4">
    <citation type="journal article" date="2013" name="Biochem. Biophys. Res. Commun.">
        <title>Four products from Escherichia coli pseudogenes increase hydrogen production.</title>
        <authorList>
            <person name="Mohd Yusoff M.Z."/>
            <person name="Hashiguchi Y."/>
            <person name="Maeda T."/>
            <person name="Wood T.K."/>
        </authorList>
    </citation>
    <scope>FUNCTION</scope>
    <scope>DISRUPTION PHENOTYPE</scope>
    <source>
        <strain>K12 / BW25113</strain>
    </source>
</reference>
<accession>P77087</accession>
<accession>A0A385XJE2</accession>
<accession>Q2MBL8</accession>
<keyword id="KW-1185">Reference proteome</keyword>
<comment type="function">
    <text evidence="3">Might play a role in cell growth during glycolysis.</text>
</comment>
<comment type="disruption phenotype">
    <text evidence="1">Produces less H(2) during fermentation on minimal glucose medium, but not on complex glucose or complex formate medium. Alters production of organic acids when grown on minimal glucose medium; complementation was not reported.</text>
</comment>
<comment type="miscellaneous">
    <text>Encoded by the cryptic lambdoid prophage DLP12.</text>
</comment>
<comment type="miscellaneous">
    <text evidence="2">Missing about 60 C-terminal residues compared to orthologs.</text>
</comment>
<comment type="similarity">
    <text evidence="2">Belongs to the tfa family.</text>
</comment>
<proteinExistence type="inferred from homology"/>
<gene>
    <name type="primary">tfaX</name>
    <name type="synonym">ylcE</name>
    <name type="ordered locus">b0563</name>
    <name type="ordered locus">JW0552</name>
</gene>